<protein>
    <recommendedName>
        <fullName evidence="2">Large ribosomal subunit protein bL19</fullName>
    </recommendedName>
    <alternativeName>
        <fullName>50S ribosomal protein L19</fullName>
    </alternativeName>
</protein>
<dbReference type="EMBL" id="L43967">
    <property type="protein sequence ID" value="AAC72464.1"/>
    <property type="molecule type" value="Genomic_DNA"/>
</dbReference>
<dbReference type="PIR" id="A64249">
    <property type="entry name" value="A64249"/>
</dbReference>
<dbReference type="RefSeq" id="WP_010869484.1">
    <property type="nucleotide sequence ID" value="NC_000908.2"/>
</dbReference>
<dbReference type="SMR" id="P47682"/>
<dbReference type="FunCoup" id="P47682">
    <property type="interactions" value="176"/>
</dbReference>
<dbReference type="STRING" id="243273.MG_444"/>
<dbReference type="GeneID" id="88282624"/>
<dbReference type="KEGG" id="mge:MG_444"/>
<dbReference type="eggNOG" id="COG0335">
    <property type="taxonomic scope" value="Bacteria"/>
</dbReference>
<dbReference type="HOGENOM" id="CLU_103507_2_1_14"/>
<dbReference type="InParanoid" id="P47682"/>
<dbReference type="OrthoDB" id="9803541at2"/>
<dbReference type="BioCyc" id="MGEN243273:G1GJ2-537-MONOMER"/>
<dbReference type="Proteomes" id="UP000000807">
    <property type="component" value="Chromosome"/>
</dbReference>
<dbReference type="GO" id="GO:0022625">
    <property type="term" value="C:cytosolic large ribosomal subunit"/>
    <property type="evidence" value="ECO:0000318"/>
    <property type="project" value="GO_Central"/>
</dbReference>
<dbReference type="GO" id="GO:0003735">
    <property type="term" value="F:structural constituent of ribosome"/>
    <property type="evidence" value="ECO:0000318"/>
    <property type="project" value="GO_Central"/>
</dbReference>
<dbReference type="GO" id="GO:0006412">
    <property type="term" value="P:translation"/>
    <property type="evidence" value="ECO:0007669"/>
    <property type="project" value="UniProtKB-UniRule"/>
</dbReference>
<dbReference type="Gene3D" id="2.30.30.790">
    <property type="match status" value="1"/>
</dbReference>
<dbReference type="HAMAP" id="MF_00402">
    <property type="entry name" value="Ribosomal_bL19"/>
    <property type="match status" value="1"/>
</dbReference>
<dbReference type="InterPro" id="IPR001857">
    <property type="entry name" value="Ribosomal_bL19"/>
</dbReference>
<dbReference type="InterPro" id="IPR018257">
    <property type="entry name" value="Ribosomal_bL19_CS"/>
</dbReference>
<dbReference type="InterPro" id="IPR038657">
    <property type="entry name" value="Ribosomal_bL19_sf"/>
</dbReference>
<dbReference type="InterPro" id="IPR008991">
    <property type="entry name" value="Translation_prot_SH3-like_sf"/>
</dbReference>
<dbReference type="NCBIfam" id="TIGR01024">
    <property type="entry name" value="rplS_bact"/>
    <property type="match status" value="1"/>
</dbReference>
<dbReference type="PANTHER" id="PTHR15680:SF9">
    <property type="entry name" value="LARGE RIBOSOMAL SUBUNIT PROTEIN BL19M"/>
    <property type="match status" value="1"/>
</dbReference>
<dbReference type="PANTHER" id="PTHR15680">
    <property type="entry name" value="RIBOSOMAL PROTEIN L19"/>
    <property type="match status" value="1"/>
</dbReference>
<dbReference type="Pfam" id="PF01245">
    <property type="entry name" value="Ribosomal_L19"/>
    <property type="match status" value="1"/>
</dbReference>
<dbReference type="PIRSF" id="PIRSF002191">
    <property type="entry name" value="Ribosomal_L19"/>
    <property type="match status" value="1"/>
</dbReference>
<dbReference type="PRINTS" id="PR00061">
    <property type="entry name" value="RIBOSOMALL19"/>
</dbReference>
<dbReference type="SUPFAM" id="SSF50104">
    <property type="entry name" value="Translation proteins SH3-like domain"/>
    <property type="match status" value="1"/>
</dbReference>
<dbReference type="PROSITE" id="PS01015">
    <property type="entry name" value="RIBOSOMAL_L19"/>
    <property type="match status" value="1"/>
</dbReference>
<gene>
    <name type="primary">rplS</name>
    <name type="synonym">rpl19</name>
    <name type="ordered locus">MG444</name>
</gene>
<name>RL19_MYCGE</name>
<organism>
    <name type="scientific">Mycoplasma genitalium (strain ATCC 33530 / DSM 19775 / NCTC 10195 / G37)</name>
    <name type="common">Mycoplasmoides genitalium</name>
    <dbReference type="NCBI Taxonomy" id="243273"/>
    <lineage>
        <taxon>Bacteria</taxon>
        <taxon>Bacillati</taxon>
        <taxon>Mycoplasmatota</taxon>
        <taxon>Mycoplasmoidales</taxon>
        <taxon>Mycoplasmoidaceae</taxon>
        <taxon>Mycoplasmoides</taxon>
    </lineage>
</organism>
<proteinExistence type="inferred from homology"/>
<keyword id="KW-1185">Reference proteome</keyword>
<keyword id="KW-0687">Ribonucleoprotein</keyword>
<keyword id="KW-0689">Ribosomal protein</keyword>
<comment type="function">
    <text evidence="1">This protein is located at the 30S-50S ribosomal subunit interface and may play a role in the structure and function of the aminoacyl-tRNA binding site.</text>
</comment>
<comment type="similarity">
    <text evidence="2">Belongs to the bacterial ribosomal protein bL19 family.</text>
</comment>
<sequence>MKKINKQALIDAVEQKQLKEYVPEFGAGDEVNVAIKLREKEKVRVQNFTGTVLRRRGRGISETFMVRKTTDGIPIEKNFQIHNPNIDIEVKRRGKVRRAYISYMRERSGKSAKIKEKKS</sequence>
<accession>P47682</accession>
<feature type="chain" id="PRO_0000163485" description="Large ribosomal subunit protein bL19">
    <location>
        <begin position="1"/>
        <end position="119"/>
    </location>
</feature>
<evidence type="ECO:0000250" key="1"/>
<evidence type="ECO:0000305" key="2"/>
<reference key="1">
    <citation type="journal article" date="1995" name="Science">
        <title>The minimal gene complement of Mycoplasma genitalium.</title>
        <authorList>
            <person name="Fraser C.M."/>
            <person name="Gocayne J.D."/>
            <person name="White O."/>
            <person name="Adams M.D."/>
            <person name="Clayton R.A."/>
            <person name="Fleischmann R.D."/>
            <person name="Bult C.J."/>
            <person name="Kerlavage A.R."/>
            <person name="Sutton G.G."/>
            <person name="Kelley J.M."/>
            <person name="Fritchman J.L."/>
            <person name="Weidman J.F."/>
            <person name="Small K.V."/>
            <person name="Sandusky M."/>
            <person name="Fuhrmann J.L."/>
            <person name="Nguyen D.T."/>
            <person name="Utterback T.R."/>
            <person name="Saudek D.M."/>
            <person name="Phillips C.A."/>
            <person name="Merrick J.M."/>
            <person name="Tomb J.-F."/>
            <person name="Dougherty B.A."/>
            <person name="Bott K.F."/>
            <person name="Hu P.-C."/>
            <person name="Lucier T.S."/>
            <person name="Peterson S.N."/>
            <person name="Smith H.O."/>
            <person name="Hutchison C.A. III"/>
            <person name="Venter J.C."/>
        </authorList>
    </citation>
    <scope>NUCLEOTIDE SEQUENCE [LARGE SCALE GENOMIC DNA]</scope>
    <source>
        <strain>ATCC 33530 / DSM 19775 / NCTC 10195 / G37</strain>
    </source>
</reference>